<evidence type="ECO:0000250" key="1">
    <source>
        <dbReference type="UniProtKB" id="Q1XH05"/>
    </source>
</evidence>
<evidence type="ECO:0000250" key="2">
    <source>
        <dbReference type="UniProtKB" id="Q75I94"/>
    </source>
</evidence>
<evidence type="ECO:0000250" key="3">
    <source>
        <dbReference type="UniProtKB" id="Q7XSK0"/>
    </source>
</evidence>
<evidence type="ECO:0000250" key="4">
    <source>
        <dbReference type="UniProtKB" id="Q9SPP9"/>
    </source>
</evidence>
<evidence type="ECO:0000255" key="5"/>
<evidence type="ECO:0000255" key="6">
    <source>
        <dbReference type="PROSITE-ProRule" id="PRU00498"/>
    </source>
</evidence>
<evidence type="ECO:0000305" key="7"/>
<comment type="catalytic activity">
    <reaction evidence="2">
        <text>Hydrolysis of terminal, non-reducing beta-D-glucosyl residues with release of beta-D-glucose.</text>
        <dbReference type="EC" id="3.2.1.21"/>
    </reaction>
</comment>
<comment type="similarity">
    <text evidence="7">Belongs to the glycosyl hydrolase 1 family.</text>
</comment>
<comment type="sequence caution" evidence="7">
    <conflict type="erroneous gene model prediction">
        <sequence resource="EMBL-CDS" id="AAV31355"/>
    </conflict>
</comment>
<comment type="sequence caution" evidence="7">
    <conflict type="erroneous gene model prediction">
        <sequence resource="EMBL-CDS" id="BAF17243"/>
    </conflict>
</comment>
<comment type="sequence caution" evidence="7">
    <conflict type="erroneous gene model prediction">
        <sequence resource="EMBL-CDS" id="EEE63446"/>
    </conflict>
</comment>
<organism>
    <name type="scientific">Oryza sativa subsp. japonica</name>
    <name type="common">Rice</name>
    <dbReference type="NCBI Taxonomy" id="39947"/>
    <lineage>
        <taxon>Eukaryota</taxon>
        <taxon>Viridiplantae</taxon>
        <taxon>Streptophyta</taxon>
        <taxon>Embryophyta</taxon>
        <taxon>Tracheophyta</taxon>
        <taxon>Spermatophyta</taxon>
        <taxon>Magnoliopsida</taxon>
        <taxon>Liliopsida</taxon>
        <taxon>Poales</taxon>
        <taxon>Poaceae</taxon>
        <taxon>BOP clade</taxon>
        <taxon>Oryzoideae</taxon>
        <taxon>Oryzeae</taxon>
        <taxon>Oryzinae</taxon>
        <taxon>Oryza</taxon>
        <taxon>Oryza sativa</taxon>
    </lineage>
</organism>
<reference key="1">
    <citation type="journal article" date="2005" name="Mol. Genet. Genomics">
        <title>A fine physical map of the rice chromosome 5.</title>
        <authorList>
            <person name="Cheng C.-H."/>
            <person name="Chung M.C."/>
            <person name="Liu S.-M."/>
            <person name="Chen S.-K."/>
            <person name="Kao F.Y."/>
            <person name="Lin S.-J."/>
            <person name="Hsiao S.-H."/>
            <person name="Tseng I.C."/>
            <person name="Hsing Y.-I.C."/>
            <person name="Wu H.-P."/>
            <person name="Chen C.-S."/>
            <person name="Shaw J.-F."/>
            <person name="Wu J."/>
            <person name="Matsumoto T."/>
            <person name="Sasaki T."/>
            <person name="Chen H.-C."/>
            <person name="Chow T.-Y."/>
        </authorList>
    </citation>
    <scope>NUCLEOTIDE SEQUENCE [LARGE SCALE GENOMIC DNA]</scope>
    <source>
        <strain>cv. Nipponbare</strain>
    </source>
</reference>
<reference key="2">
    <citation type="journal article" date="2005" name="Nature">
        <title>The map-based sequence of the rice genome.</title>
        <authorList>
            <consortium name="International rice genome sequencing project (IRGSP)"/>
        </authorList>
    </citation>
    <scope>NUCLEOTIDE SEQUENCE [LARGE SCALE GENOMIC DNA]</scope>
    <source>
        <strain>cv. Nipponbare</strain>
    </source>
</reference>
<reference key="3">
    <citation type="journal article" date="2008" name="Nucleic Acids Res.">
        <title>The rice annotation project database (RAP-DB): 2008 update.</title>
        <authorList>
            <consortium name="The rice annotation project (RAP)"/>
        </authorList>
    </citation>
    <scope>GENOME REANNOTATION</scope>
    <source>
        <strain>cv. Nipponbare</strain>
    </source>
</reference>
<reference key="4">
    <citation type="journal article" date="2013" name="Rice">
        <title>Improvement of the Oryza sativa Nipponbare reference genome using next generation sequence and optical map data.</title>
        <authorList>
            <person name="Kawahara Y."/>
            <person name="de la Bastide M."/>
            <person name="Hamilton J.P."/>
            <person name="Kanamori H."/>
            <person name="McCombie W.R."/>
            <person name="Ouyang S."/>
            <person name="Schwartz D.C."/>
            <person name="Tanaka T."/>
            <person name="Wu J."/>
            <person name="Zhou S."/>
            <person name="Childs K.L."/>
            <person name="Davidson R.M."/>
            <person name="Lin H."/>
            <person name="Quesada-Ocampo L."/>
            <person name="Vaillancourt B."/>
            <person name="Sakai H."/>
            <person name="Lee S.S."/>
            <person name="Kim J."/>
            <person name="Numa H."/>
            <person name="Itoh T."/>
            <person name="Buell C.R."/>
            <person name="Matsumoto T."/>
        </authorList>
    </citation>
    <scope>GENOME REANNOTATION</scope>
    <source>
        <strain>cv. Nipponbare</strain>
    </source>
</reference>
<reference key="5">
    <citation type="journal article" date="2005" name="PLoS Biol.">
        <title>The genomes of Oryza sativa: a history of duplications.</title>
        <authorList>
            <person name="Yu J."/>
            <person name="Wang J."/>
            <person name="Lin W."/>
            <person name="Li S."/>
            <person name="Li H."/>
            <person name="Zhou J."/>
            <person name="Ni P."/>
            <person name="Dong W."/>
            <person name="Hu S."/>
            <person name="Zeng C."/>
            <person name="Zhang J."/>
            <person name="Zhang Y."/>
            <person name="Li R."/>
            <person name="Xu Z."/>
            <person name="Li S."/>
            <person name="Li X."/>
            <person name="Zheng H."/>
            <person name="Cong L."/>
            <person name="Lin L."/>
            <person name="Yin J."/>
            <person name="Geng J."/>
            <person name="Li G."/>
            <person name="Shi J."/>
            <person name="Liu J."/>
            <person name="Lv H."/>
            <person name="Li J."/>
            <person name="Wang J."/>
            <person name="Deng Y."/>
            <person name="Ran L."/>
            <person name="Shi X."/>
            <person name="Wang X."/>
            <person name="Wu Q."/>
            <person name="Li C."/>
            <person name="Ren X."/>
            <person name="Wang J."/>
            <person name="Wang X."/>
            <person name="Li D."/>
            <person name="Liu D."/>
            <person name="Zhang X."/>
            <person name="Ji Z."/>
            <person name="Zhao W."/>
            <person name="Sun Y."/>
            <person name="Zhang Z."/>
            <person name="Bao J."/>
            <person name="Han Y."/>
            <person name="Dong L."/>
            <person name="Ji J."/>
            <person name="Chen P."/>
            <person name="Wu S."/>
            <person name="Liu J."/>
            <person name="Xiao Y."/>
            <person name="Bu D."/>
            <person name="Tan J."/>
            <person name="Yang L."/>
            <person name="Ye C."/>
            <person name="Zhang J."/>
            <person name="Xu J."/>
            <person name="Zhou Y."/>
            <person name="Yu Y."/>
            <person name="Zhang B."/>
            <person name="Zhuang S."/>
            <person name="Wei H."/>
            <person name="Liu B."/>
            <person name="Lei M."/>
            <person name="Yu H."/>
            <person name="Li Y."/>
            <person name="Xu H."/>
            <person name="Wei S."/>
            <person name="He X."/>
            <person name="Fang L."/>
            <person name="Zhang Z."/>
            <person name="Zhang Y."/>
            <person name="Huang X."/>
            <person name="Su Z."/>
            <person name="Tong W."/>
            <person name="Li J."/>
            <person name="Tong Z."/>
            <person name="Li S."/>
            <person name="Ye J."/>
            <person name="Wang L."/>
            <person name="Fang L."/>
            <person name="Lei T."/>
            <person name="Chen C.-S."/>
            <person name="Chen H.-C."/>
            <person name="Xu Z."/>
            <person name="Li H."/>
            <person name="Huang H."/>
            <person name="Zhang F."/>
            <person name="Xu H."/>
            <person name="Li N."/>
            <person name="Zhao C."/>
            <person name="Li S."/>
            <person name="Dong L."/>
            <person name="Huang Y."/>
            <person name="Li L."/>
            <person name="Xi Y."/>
            <person name="Qi Q."/>
            <person name="Li W."/>
            <person name="Zhang B."/>
            <person name="Hu W."/>
            <person name="Zhang Y."/>
            <person name="Tian X."/>
            <person name="Jiao Y."/>
            <person name="Liang X."/>
            <person name="Jin J."/>
            <person name="Gao L."/>
            <person name="Zheng W."/>
            <person name="Hao B."/>
            <person name="Liu S.-M."/>
            <person name="Wang W."/>
            <person name="Yuan L."/>
            <person name="Cao M."/>
            <person name="McDermott J."/>
            <person name="Samudrala R."/>
            <person name="Wang J."/>
            <person name="Wong G.K.-S."/>
            <person name="Yang H."/>
        </authorList>
    </citation>
    <scope>NUCLEOTIDE SEQUENCE [LARGE SCALE GENOMIC DNA]</scope>
    <source>
        <strain>cv. Nipponbare</strain>
    </source>
</reference>
<reference key="6">
    <citation type="journal article" date="2006" name="BMC Plant Biol.">
        <title>Analysis of rice glycosyl hydrolase family 1 and expression of Os4bglu12 beta-glucosidase.</title>
        <authorList>
            <person name="Opassiri R."/>
            <person name="Pomthong B."/>
            <person name="Onkoksoong T."/>
            <person name="Akiyama T."/>
            <person name="Esen A."/>
            <person name="Ketudat Cairns J.R."/>
        </authorList>
    </citation>
    <scope>GENE FAMILY</scope>
    <scope>NOMENCLATURE</scope>
</reference>
<keyword id="KW-1015">Disulfide bond</keyword>
<keyword id="KW-0325">Glycoprotein</keyword>
<keyword id="KW-0326">Glycosidase</keyword>
<keyword id="KW-0378">Hydrolase</keyword>
<keyword id="KW-1185">Reference proteome</keyword>
<keyword id="KW-0732">Signal</keyword>
<feature type="signal peptide" evidence="5">
    <location>
        <begin position="1"/>
        <end position="25"/>
    </location>
</feature>
<feature type="chain" id="PRO_0000390338" description="Beta-glucosidase 21">
    <location>
        <begin position="26"/>
        <end position="514"/>
    </location>
</feature>
<feature type="active site" description="Proton donor" evidence="3">
    <location>
        <position position="193"/>
    </location>
</feature>
<feature type="active site" description="Nucleophile" evidence="3">
    <location>
        <position position="406"/>
    </location>
</feature>
<feature type="binding site" evidence="3">
    <location>
        <position position="47"/>
    </location>
    <ligand>
        <name>a beta-D-glucoside</name>
        <dbReference type="ChEBI" id="CHEBI:22798"/>
    </ligand>
</feature>
<feature type="binding site" evidence="3">
    <location>
        <position position="147"/>
    </location>
    <ligand>
        <name>a beta-D-glucoside</name>
        <dbReference type="ChEBI" id="CHEBI:22798"/>
    </ligand>
</feature>
<feature type="binding site" evidence="3">
    <location>
        <position position="336"/>
    </location>
    <ligand>
        <name>a beta-D-glucoside</name>
        <dbReference type="ChEBI" id="CHEBI:22798"/>
    </ligand>
</feature>
<feature type="binding site" evidence="4">
    <location>
        <position position="406"/>
    </location>
    <ligand>
        <name>a beta-D-glucoside</name>
        <dbReference type="ChEBI" id="CHEBI:22798"/>
    </ligand>
</feature>
<feature type="binding site" evidence="3">
    <location>
        <position position="448"/>
    </location>
    <ligand>
        <name>a beta-D-glucoside</name>
        <dbReference type="ChEBI" id="CHEBI:22798"/>
    </ligand>
</feature>
<feature type="binding site" evidence="1">
    <location>
        <position position="465"/>
    </location>
    <ligand>
        <name>a beta-D-glucoside</name>
        <dbReference type="ChEBI" id="CHEBI:22798"/>
    </ligand>
</feature>
<feature type="glycosylation site" description="N-linked (GlcNAc...) asparagine" evidence="6">
    <location>
        <position position="219"/>
    </location>
</feature>
<feature type="glycosylation site" description="N-linked (GlcNAc...) asparagine" evidence="6">
    <location>
        <position position="224"/>
    </location>
</feature>
<feature type="glycosylation site" description="N-linked (GlcNAc...) asparagine" evidence="6">
    <location>
        <position position="407"/>
    </location>
</feature>
<feature type="glycosylation site" description="N-linked (GlcNAc...) asparagine" evidence="6">
    <location>
        <position position="494"/>
    </location>
</feature>
<feature type="disulfide bond" evidence="3">
    <location>
        <begin position="212"/>
        <end position="220"/>
    </location>
</feature>
<protein>
    <recommendedName>
        <fullName>Beta-glucosidase 21</fullName>
        <shortName>Os5bglu21</shortName>
        <ecNumber evidence="2">3.2.1.21</ecNumber>
    </recommendedName>
</protein>
<sequence length="514" mass="57939">MERPLHLLLVFLSSPWLLLLQGVSSLQFTRDDFPHDFAFGAGTSAYQYEGGAAEDGRTPSIWDTYTHSGRHPEDETGDVASDGYHKYKEDVKLMSEIGLEAYRFTISWSRLIPSGRGAVNLKALQFYNSMINELVKAGIQIHVVMYHMDLPQSLQDEYGGWISPKIVDDFTAYADVCFREFGDRVVHWTTVLEPNAMAQAGYDMGILPPNRCSYPFGSNCTAGNSSVEPYLFIHHSLLAHASAVRLYREKYKVAQKGIIGINIYSMWFYPFTDSAEEIGATERAKKFIYGWILHPLVFGDYPDTMKKAAGSRLPIFSNHESEMVTNSFDFIGLNHYSSVYTSNNNNVVKAPLQDLTADVATLFRVTKNDTPTPVFVPGTIVDPRGLEHALKYIREKYGNLPIYIQENGSGSSSETLDDVERINYLAKYIAATLKAIRSGANVKGYSMWSFVDLYELFGGYSTWHFGLVAVDFDSEKRRRQPRRSASWYSEFLKNNSVIRVEEDGFVSAASHAQL</sequence>
<accession>Q60DY1</accession>
<accession>A0A0P0WLP0</accession>
<accession>Q0DIT0</accession>
<name>BGL21_ORYSJ</name>
<dbReference type="EC" id="3.2.1.21" evidence="2"/>
<dbReference type="EMBL" id="AC137618">
    <property type="protein sequence ID" value="AAV31355.1"/>
    <property type="status" value="ALT_SEQ"/>
    <property type="molecule type" value="Genomic_DNA"/>
</dbReference>
<dbReference type="EMBL" id="AP008211">
    <property type="protein sequence ID" value="BAF17243.2"/>
    <property type="status" value="ALT_SEQ"/>
    <property type="molecule type" value="Genomic_DNA"/>
</dbReference>
<dbReference type="EMBL" id="AP014961">
    <property type="protein sequence ID" value="BAS93643.1"/>
    <property type="molecule type" value="Genomic_DNA"/>
</dbReference>
<dbReference type="EMBL" id="CM000142">
    <property type="protein sequence ID" value="EEE63446.1"/>
    <property type="status" value="ALT_SEQ"/>
    <property type="molecule type" value="Genomic_DNA"/>
</dbReference>
<dbReference type="RefSeq" id="XP_015640029.1">
    <property type="nucleotide sequence ID" value="XM_015784543.1"/>
</dbReference>
<dbReference type="SMR" id="Q60DY1"/>
<dbReference type="FunCoup" id="Q60DY1">
    <property type="interactions" value="340"/>
</dbReference>
<dbReference type="STRING" id="39947.Q60DY1"/>
<dbReference type="CAZy" id="GH1">
    <property type="family name" value="Glycoside Hydrolase Family 1"/>
</dbReference>
<dbReference type="GlyCosmos" id="Q60DY1">
    <property type="glycosylation" value="4 sites, No reported glycans"/>
</dbReference>
<dbReference type="PaxDb" id="39947-Q60DY1"/>
<dbReference type="EnsemblPlants" id="Os05t0366000-00">
    <property type="protein sequence ID" value="Os05t0366000-00"/>
    <property type="gene ID" value="Os05g0366000"/>
</dbReference>
<dbReference type="Gramene" id="Os05t0366000-00">
    <property type="protein sequence ID" value="Os05t0366000-00"/>
    <property type="gene ID" value="Os05g0366000"/>
</dbReference>
<dbReference type="KEGG" id="dosa:Os05g0366000"/>
<dbReference type="eggNOG" id="KOG0626">
    <property type="taxonomic scope" value="Eukaryota"/>
</dbReference>
<dbReference type="HOGENOM" id="CLU_001859_1_0_1"/>
<dbReference type="InParanoid" id="Q60DY1"/>
<dbReference type="OMA" id="MYHMDLP"/>
<dbReference type="OrthoDB" id="65569at2759"/>
<dbReference type="Proteomes" id="UP000000763">
    <property type="component" value="Chromosome 5"/>
</dbReference>
<dbReference type="Proteomes" id="UP000007752">
    <property type="component" value="Chromosome 5"/>
</dbReference>
<dbReference type="Proteomes" id="UP000059680">
    <property type="component" value="Chromosome 5"/>
</dbReference>
<dbReference type="GO" id="GO:0033907">
    <property type="term" value="F:beta-D-fucosidase activity"/>
    <property type="evidence" value="ECO:0007669"/>
    <property type="project" value="UniProtKB-ARBA"/>
</dbReference>
<dbReference type="GO" id="GO:0004565">
    <property type="term" value="F:beta-galactosidase activity"/>
    <property type="evidence" value="ECO:0007669"/>
    <property type="project" value="UniProtKB-ARBA"/>
</dbReference>
<dbReference type="GO" id="GO:0008422">
    <property type="term" value="F:beta-glucosidase activity"/>
    <property type="evidence" value="ECO:0000318"/>
    <property type="project" value="GO_Central"/>
</dbReference>
<dbReference type="GO" id="GO:0005975">
    <property type="term" value="P:carbohydrate metabolic process"/>
    <property type="evidence" value="ECO:0007669"/>
    <property type="project" value="InterPro"/>
</dbReference>
<dbReference type="FunFam" id="3.20.20.80:FF:000069">
    <property type="entry name" value="Beta-glucosidase 1"/>
    <property type="match status" value="1"/>
</dbReference>
<dbReference type="Gene3D" id="3.20.20.80">
    <property type="entry name" value="Glycosidases"/>
    <property type="match status" value="1"/>
</dbReference>
<dbReference type="InterPro" id="IPR001360">
    <property type="entry name" value="Glyco_hydro_1"/>
</dbReference>
<dbReference type="InterPro" id="IPR033132">
    <property type="entry name" value="Glyco_hydro_1_N_CS"/>
</dbReference>
<dbReference type="InterPro" id="IPR017853">
    <property type="entry name" value="Glycoside_hydrolase_SF"/>
</dbReference>
<dbReference type="PANTHER" id="PTHR10353:SF204">
    <property type="entry name" value="BETA-GLUCOSIDASE 20"/>
    <property type="match status" value="1"/>
</dbReference>
<dbReference type="PANTHER" id="PTHR10353">
    <property type="entry name" value="GLYCOSYL HYDROLASE"/>
    <property type="match status" value="1"/>
</dbReference>
<dbReference type="Pfam" id="PF00232">
    <property type="entry name" value="Glyco_hydro_1"/>
    <property type="match status" value="1"/>
</dbReference>
<dbReference type="PRINTS" id="PR00131">
    <property type="entry name" value="GLHYDRLASE1"/>
</dbReference>
<dbReference type="SUPFAM" id="SSF51445">
    <property type="entry name" value="(Trans)glycosidases"/>
    <property type="match status" value="1"/>
</dbReference>
<dbReference type="PROSITE" id="PS00653">
    <property type="entry name" value="GLYCOSYL_HYDROL_F1_2"/>
    <property type="match status" value="1"/>
</dbReference>
<proteinExistence type="evidence at transcript level"/>
<gene>
    <name type="primary">BGLU21</name>
    <name type="ordered locus">Os05g0366000</name>
    <name type="ordered locus">LOC_Os05g30300</name>
    <name type="ORF">OsJ_18259</name>
    <name type="ORF">OSJNBa0090H02.7</name>
</gene>